<comment type="function">
    <text evidence="1">F(1)F(0) ATP synthase produces ATP from ADP in the presence of a proton or sodium gradient. F-type ATPases consist of two structural domains, F(1) containing the extramembraneous catalytic core and F(0) containing the membrane proton channel, linked together by a central stalk and a peripheral stalk. During catalysis, ATP synthesis in the catalytic domain of F(1) is coupled via a rotary mechanism of the central stalk subunits to proton translocation.</text>
</comment>
<comment type="function">
    <text evidence="1">This protein is part of the stalk that links CF(0) to CF(1). It either transmits conformational changes from CF(0) to CF(1) or is implicated in proton conduction.</text>
</comment>
<comment type="subunit">
    <text evidence="1">F-type ATPases have 2 components, F(1) - the catalytic core - and F(0) - the membrane proton channel. F(1) has five subunits: alpha(3), beta(3), gamma(1), delta(1), epsilon(1). F(0) has three main subunits: a(1), b(2) and c(10-14). The alpha and beta chains form an alternating ring which encloses part of the gamma chain. F(1) is attached to F(0) by a central stalk formed by the gamma and epsilon chains, while a peripheral stalk is formed by the delta and b chains.</text>
</comment>
<comment type="subcellular location">
    <subcellularLocation>
        <location evidence="1">Cell inner membrane</location>
        <topology evidence="1">Peripheral membrane protein</topology>
    </subcellularLocation>
</comment>
<comment type="similarity">
    <text evidence="1">Belongs to the ATPase delta chain family.</text>
</comment>
<reference key="1">
    <citation type="journal article" date="2005" name="Science">
        <title>Extensive DNA inversions in the B. fragilis genome control variable gene expression.</title>
        <authorList>
            <person name="Cerdeno-Tarraga A.-M."/>
            <person name="Patrick S."/>
            <person name="Crossman L.C."/>
            <person name="Blakely G."/>
            <person name="Abratt V."/>
            <person name="Lennard N."/>
            <person name="Poxton I."/>
            <person name="Duerden B."/>
            <person name="Harris B."/>
            <person name="Quail M.A."/>
            <person name="Barron A."/>
            <person name="Clark L."/>
            <person name="Corton C."/>
            <person name="Doggett J."/>
            <person name="Holden M.T.G."/>
            <person name="Larke N."/>
            <person name="Line A."/>
            <person name="Lord A."/>
            <person name="Norbertczak H."/>
            <person name="Ormond D."/>
            <person name="Price C."/>
            <person name="Rabbinowitsch E."/>
            <person name="Woodward J."/>
            <person name="Barrell B.G."/>
            <person name="Parkhill J."/>
        </authorList>
    </citation>
    <scope>NUCLEOTIDE SEQUENCE [LARGE SCALE GENOMIC DNA]</scope>
    <source>
        <strain>ATCC 25285 / DSM 2151 / CCUG 4856 / JCM 11019 / LMG 10263 / NCTC 9343 / Onslow / VPI 2553 / EN-2</strain>
    </source>
</reference>
<evidence type="ECO:0000255" key="1">
    <source>
        <dbReference type="HAMAP-Rule" id="MF_01416"/>
    </source>
</evidence>
<proteinExistence type="inferred from homology"/>
<gene>
    <name evidence="1" type="primary">atpH</name>
    <name type="ordered locus">BF2233</name>
</gene>
<name>ATPD_BACFN</name>
<organism>
    <name type="scientific">Bacteroides fragilis (strain ATCC 25285 / DSM 2151 / CCUG 4856 / JCM 11019 / LMG 10263 / NCTC 9343 / Onslow / VPI 2553 / EN-2)</name>
    <dbReference type="NCBI Taxonomy" id="272559"/>
    <lineage>
        <taxon>Bacteria</taxon>
        <taxon>Pseudomonadati</taxon>
        <taxon>Bacteroidota</taxon>
        <taxon>Bacteroidia</taxon>
        <taxon>Bacteroidales</taxon>
        <taxon>Bacteroidaceae</taxon>
        <taxon>Bacteroides</taxon>
    </lineage>
</organism>
<dbReference type="EMBL" id="CR626927">
    <property type="protein sequence ID" value="CAH07927.1"/>
    <property type="molecule type" value="Genomic_DNA"/>
</dbReference>
<dbReference type="RefSeq" id="WP_008768717.1">
    <property type="nucleotide sequence ID" value="NZ_UFTH01000001.1"/>
</dbReference>
<dbReference type="SMR" id="Q5LD83"/>
<dbReference type="PaxDb" id="272559-BF9343_2146"/>
<dbReference type="KEGG" id="bfs:BF9343_2146"/>
<dbReference type="eggNOG" id="COG0712">
    <property type="taxonomic scope" value="Bacteria"/>
</dbReference>
<dbReference type="HOGENOM" id="CLU_085114_4_0_10"/>
<dbReference type="Proteomes" id="UP000006731">
    <property type="component" value="Chromosome"/>
</dbReference>
<dbReference type="GO" id="GO:0005886">
    <property type="term" value="C:plasma membrane"/>
    <property type="evidence" value="ECO:0007669"/>
    <property type="project" value="UniProtKB-SubCell"/>
</dbReference>
<dbReference type="GO" id="GO:0045259">
    <property type="term" value="C:proton-transporting ATP synthase complex"/>
    <property type="evidence" value="ECO:0007669"/>
    <property type="project" value="UniProtKB-KW"/>
</dbReference>
<dbReference type="GO" id="GO:0046933">
    <property type="term" value="F:proton-transporting ATP synthase activity, rotational mechanism"/>
    <property type="evidence" value="ECO:0007669"/>
    <property type="project" value="UniProtKB-UniRule"/>
</dbReference>
<dbReference type="Gene3D" id="1.10.520.20">
    <property type="entry name" value="N-terminal domain of the delta subunit of the F1F0-ATP synthase"/>
    <property type="match status" value="1"/>
</dbReference>
<dbReference type="HAMAP" id="MF_01416">
    <property type="entry name" value="ATP_synth_delta_bact"/>
    <property type="match status" value="1"/>
</dbReference>
<dbReference type="InterPro" id="IPR026015">
    <property type="entry name" value="ATP_synth_OSCP/delta_N_sf"/>
</dbReference>
<dbReference type="InterPro" id="IPR000711">
    <property type="entry name" value="ATPase_OSCP/dsu"/>
</dbReference>
<dbReference type="NCBIfam" id="TIGR01145">
    <property type="entry name" value="ATP_synt_delta"/>
    <property type="match status" value="1"/>
</dbReference>
<dbReference type="NCBIfam" id="NF009964">
    <property type="entry name" value="PRK13429.1-3"/>
    <property type="match status" value="1"/>
</dbReference>
<dbReference type="PANTHER" id="PTHR11910">
    <property type="entry name" value="ATP SYNTHASE DELTA CHAIN"/>
    <property type="match status" value="1"/>
</dbReference>
<dbReference type="Pfam" id="PF00213">
    <property type="entry name" value="OSCP"/>
    <property type="match status" value="1"/>
</dbReference>
<dbReference type="PRINTS" id="PR00125">
    <property type="entry name" value="ATPASEDELTA"/>
</dbReference>
<dbReference type="SUPFAM" id="SSF47928">
    <property type="entry name" value="N-terminal domain of the delta subunit of the F1F0-ATP synthase"/>
    <property type="match status" value="1"/>
</dbReference>
<protein>
    <recommendedName>
        <fullName evidence="1">ATP synthase subunit delta</fullName>
    </recommendedName>
    <alternativeName>
        <fullName evidence="1">ATP synthase F(1) sector subunit delta</fullName>
    </alternativeName>
    <alternativeName>
        <fullName evidence="1">F-type ATPase subunit delta</fullName>
        <shortName evidence="1">F-ATPase subunit delta</shortName>
    </alternativeName>
</protein>
<accession>Q5LD83</accession>
<sequence>MEVGIISMRYAKALMAYAEERGAEERLYHELVTLAHSFRTVKGFCAVLDNPIVSVNEKFNLICTAADGDHKPSEEFIRFIRLVLKERRETYLQFMSLMYLDLYRKKKHIGVGKLITAVPVDKATEERIRQTAAHILHAYMELETVVDPSIEGGFVFDINDYRLDASIATQLKKVKQQFIDKNRRIV</sequence>
<keyword id="KW-0066">ATP synthesis</keyword>
<keyword id="KW-0997">Cell inner membrane</keyword>
<keyword id="KW-1003">Cell membrane</keyword>
<keyword id="KW-0139">CF(1)</keyword>
<keyword id="KW-0375">Hydrogen ion transport</keyword>
<keyword id="KW-0406">Ion transport</keyword>
<keyword id="KW-0472">Membrane</keyword>
<keyword id="KW-0813">Transport</keyword>
<feature type="chain" id="PRO_1000184654" description="ATP synthase subunit delta">
    <location>
        <begin position="1"/>
        <end position="186"/>
    </location>
</feature>